<name>FDL42_ARATH</name>
<proteinExistence type="predicted"/>
<gene>
    <name type="primary">EDA41</name>
    <name type="ordered locus">At5g52460</name>
    <name type="ORF">K24M7.21</name>
</gene>
<comment type="sequence caution" evidence="2">
    <conflict type="erroneous gene model prediction">
        <sequence resource="EMBL-CDS" id="AED96216"/>
    </conflict>
</comment>
<comment type="sequence caution" evidence="2">
    <conflict type="erroneous gene model prediction">
        <sequence resource="EMBL-CDS" id="BAB10543"/>
    </conflict>
</comment>
<dbReference type="EMBL" id="AB019226">
    <property type="protein sequence ID" value="BAB10543.1"/>
    <property type="status" value="ALT_SEQ"/>
    <property type="molecule type" value="Genomic_DNA"/>
</dbReference>
<dbReference type="EMBL" id="CP002688">
    <property type="protein sequence ID" value="AED96216.1"/>
    <property type="status" value="ALT_SEQ"/>
    <property type="molecule type" value="Genomic_DNA"/>
</dbReference>
<dbReference type="RefSeq" id="NP_200059.2">
    <property type="nucleotide sequence ID" value="NM_124625.2"/>
</dbReference>
<dbReference type="STRING" id="3702.Q9FHB5"/>
<dbReference type="PaxDb" id="3702-AT5G52460.1"/>
<dbReference type="GeneID" id="835322"/>
<dbReference type="KEGG" id="ath:AT5G52460"/>
<dbReference type="Araport" id="AT5G52460"/>
<dbReference type="TAIR" id="AT5G52460">
    <property type="gene designation" value="EDA41"/>
</dbReference>
<dbReference type="HOGENOM" id="CLU_010721_1_2_1"/>
<dbReference type="InParanoid" id="Q9FHB5"/>
<dbReference type="PhylomeDB" id="Q9FHB5"/>
<dbReference type="PRO" id="PR:Q9FHB5"/>
<dbReference type="Proteomes" id="UP000006548">
    <property type="component" value="Chromosome 5"/>
</dbReference>
<dbReference type="ExpressionAtlas" id="Q9FHB5">
    <property type="expression patterns" value="differential"/>
</dbReference>
<dbReference type="InterPro" id="IPR036047">
    <property type="entry name" value="F-box-like_dom_sf"/>
</dbReference>
<dbReference type="InterPro" id="IPR001810">
    <property type="entry name" value="F-box_dom"/>
</dbReference>
<dbReference type="InterPro" id="IPR006566">
    <property type="entry name" value="FBD"/>
</dbReference>
<dbReference type="InterPro" id="IPR050232">
    <property type="entry name" value="FBL13/AtMIF1-like"/>
</dbReference>
<dbReference type="InterPro" id="IPR055411">
    <property type="entry name" value="LRR_FXL15/At3g58940/PEG3-like"/>
</dbReference>
<dbReference type="PANTHER" id="PTHR31900:SF34">
    <property type="entry name" value="EMB|CAB62440.1-RELATED"/>
    <property type="match status" value="1"/>
</dbReference>
<dbReference type="PANTHER" id="PTHR31900">
    <property type="entry name" value="F-BOX/RNI SUPERFAMILY PROTEIN-RELATED"/>
    <property type="match status" value="1"/>
</dbReference>
<dbReference type="Pfam" id="PF00646">
    <property type="entry name" value="F-box"/>
    <property type="match status" value="1"/>
</dbReference>
<dbReference type="Pfam" id="PF08387">
    <property type="entry name" value="FBD"/>
    <property type="match status" value="1"/>
</dbReference>
<dbReference type="Pfam" id="PF24758">
    <property type="entry name" value="LRR_At5g56370"/>
    <property type="match status" value="1"/>
</dbReference>
<dbReference type="SMART" id="SM00579">
    <property type="entry name" value="FBD"/>
    <property type="match status" value="1"/>
</dbReference>
<dbReference type="SUPFAM" id="SSF81383">
    <property type="entry name" value="F-box domain"/>
    <property type="match status" value="1"/>
</dbReference>
<dbReference type="PROSITE" id="PS50181">
    <property type="entry name" value="FBOX"/>
    <property type="match status" value="1"/>
</dbReference>
<organism>
    <name type="scientific">Arabidopsis thaliana</name>
    <name type="common">Mouse-ear cress</name>
    <dbReference type="NCBI Taxonomy" id="3702"/>
    <lineage>
        <taxon>Eukaryota</taxon>
        <taxon>Viridiplantae</taxon>
        <taxon>Streptophyta</taxon>
        <taxon>Embryophyta</taxon>
        <taxon>Tracheophyta</taxon>
        <taxon>Spermatophyta</taxon>
        <taxon>Magnoliopsida</taxon>
        <taxon>eudicotyledons</taxon>
        <taxon>Gunneridae</taxon>
        <taxon>Pentapetalae</taxon>
        <taxon>rosids</taxon>
        <taxon>malvids</taxon>
        <taxon>Brassicales</taxon>
        <taxon>Brassicaceae</taxon>
        <taxon>Camelineae</taxon>
        <taxon>Arabidopsis</taxon>
    </lineage>
</organism>
<protein>
    <recommendedName>
        <fullName>Putative F-box/FBD/LRR-repeat protein At5g52460</fullName>
    </recommendedName>
    <alternativeName>
        <fullName>Protein EMBRYO SAC DEVELOPMENT ARREST 41</fullName>
    </alternativeName>
</protein>
<sequence>MAERCQRIDEEVVASRDEISSLPDDLLIQILLLVPIKDAVGTMILSKRWRYVWTLLPKLEYSDPGDECESVWKFLEKLLELHKAPFLETLCIQLDVGKLVANAVDRFVRKLELELHWTAEPTSLPKSLYTCKTLVELTLSDKIIVDVPSSVCLPSLNILRLFYVVFKDENSLERLISSCSVLARSKVGLAISDNRDYRFAKVHKLRLEKPHIDVVCHTDDKFLKAISLVTYLVLPLEDPMALDFRGFTFTRLGKLVICPHGHLWLDIIPLILNNSPKLRFLAITSVMDIDPEISHCHGTNQGTVPRCLSAHLDEEFVWHGYRGNEEETQLIRYIFANAKCLKKREISTFHLEEREVIETVLKSMPRVSTTSTLVFK</sequence>
<accession>Q9FHB5</accession>
<accession>F4KG70</accession>
<reference key="1">
    <citation type="journal article" date="2000" name="DNA Res.">
        <title>Structural analysis of Arabidopsis thaliana chromosome 5. X. Sequence features of the regions of 3,076,755 bp covered by sixty P1 and TAC clones.</title>
        <authorList>
            <person name="Sato S."/>
            <person name="Nakamura Y."/>
            <person name="Kaneko T."/>
            <person name="Katoh T."/>
            <person name="Asamizu E."/>
            <person name="Kotani H."/>
            <person name="Tabata S."/>
        </authorList>
    </citation>
    <scope>NUCLEOTIDE SEQUENCE [LARGE SCALE GENOMIC DNA]</scope>
    <source>
        <strain>cv. Columbia</strain>
    </source>
</reference>
<reference key="2">
    <citation type="journal article" date="2017" name="Plant J.">
        <title>Araport11: a complete reannotation of the Arabidopsis thaliana reference genome.</title>
        <authorList>
            <person name="Cheng C.Y."/>
            <person name="Krishnakumar V."/>
            <person name="Chan A.P."/>
            <person name="Thibaud-Nissen F."/>
            <person name="Schobel S."/>
            <person name="Town C.D."/>
        </authorList>
    </citation>
    <scope>GENOME REANNOTATION</scope>
    <source>
        <strain>cv. Columbia</strain>
    </source>
</reference>
<evidence type="ECO:0000255" key="1">
    <source>
        <dbReference type="PROSITE-ProRule" id="PRU00080"/>
    </source>
</evidence>
<evidence type="ECO:0000305" key="2"/>
<keyword id="KW-0433">Leucine-rich repeat</keyword>
<keyword id="KW-1185">Reference proteome</keyword>
<keyword id="KW-0677">Repeat</keyword>
<feature type="chain" id="PRO_0000281986" description="Putative F-box/FBD/LRR-repeat protein At5g52460">
    <location>
        <begin position="1"/>
        <end position="376"/>
    </location>
</feature>
<feature type="domain" description="F-box" evidence="1">
    <location>
        <begin position="16"/>
        <end position="75"/>
    </location>
</feature>
<feature type="repeat" description="LRR 1">
    <location>
        <begin position="131"/>
        <end position="154"/>
    </location>
</feature>
<feature type="repeat" description="LRR 2">
    <location>
        <begin position="199"/>
        <end position="224"/>
    </location>
</feature>
<feature type="domain" description="FBD">
    <location>
        <begin position="296"/>
        <end position="348"/>
    </location>
</feature>